<feature type="chain" id="PRO_0000055548" description="Unknown protein from 2D-PAGE of fibroblasts">
    <location>
        <begin position="1"/>
        <end position="9" status="greater than"/>
    </location>
</feature>
<feature type="non-terminal residue">
    <location>
        <position position="9"/>
    </location>
</feature>
<keyword id="KW-0903">Direct protein sequencing</keyword>
<keyword id="KW-1185">Reference proteome</keyword>
<accession>P38640</accession>
<proteinExistence type="evidence at protein level"/>
<reference key="1">
    <citation type="journal article" date="1994" name="Electrophoresis">
        <title>Separation and sequencing of familiar and novel murine proteins using preparative two-dimensional gel electrophoresis.</title>
        <authorList>
            <person name="Merrick B.A."/>
            <person name="Patterson R.M."/>
            <person name="Wichter L.L."/>
            <person name="He C."/>
            <person name="Selkirk J.K."/>
        </authorList>
    </citation>
    <scope>PROTEIN SEQUENCE</scope>
    <source>
        <tissue>Fibroblast</tissue>
    </source>
</reference>
<sequence length="9" mass="1103">MEDEIQDXI</sequence>
<name>UF02_MOUSE</name>
<protein>
    <recommendedName>
        <fullName>Unknown protein from 2D-PAGE of fibroblasts</fullName>
    </recommendedName>
    <alternativeName>
        <fullName>P32</fullName>
    </alternativeName>
</protein>
<dbReference type="InParanoid" id="P38640"/>
<dbReference type="Proteomes" id="UP000000589">
    <property type="component" value="Unplaced"/>
</dbReference>
<organism>
    <name type="scientific">Mus musculus</name>
    <name type="common">Mouse</name>
    <dbReference type="NCBI Taxonomy" id="10090"/>
    <lineage>
        <taxon>Eukaryota</taxon>
        <taxon>Metazoa</taxon>
        <taxon>Chordata</taxon>
        <taxon>Craniata</taxon>
        <taxon>Vertebrata</taxon>
        <taxon>Euteleostomi</taxon>
        <taxon>Mammalia</taxon>
        <taxon>Eutheria</taxon>
        <taxon>Euarchontoglires</taxon>
        <taxon>Glires</taxon>
        <taxon>Rodentia</taxon>
        <taxon>Myomorpha</taxon>
        <taxon>Muroidea</taxon>
        <taxon>Muridae</taxon>
        <taxon>Murinae</taxon>
        <taxon>Mus</taxon>
        <taxon>Mus</taxon>
    </lineage>
</organism>
<comment type="miscellaneous">
    <text>On the 2D-gel the determined pI of this unknown protein is: 6.0, its MW is: 32 kDa.</text>
</comment>